<comment type="function">
    <text evidence="1">Plays a role in nuclear translocation of the viral pre-integration complex (PIC), thus is required for the virus to infect non-dividing cells. Targets specific host proteins for degradation by the 26S proteasome. Acts by associating with the cellular CUL4A-DDB1 E3 ligase complex through direct interaction with host VPRPB/DCAF-1. This change in the E3 ligase substrate specificity results in the degradation of host SAMHD1. In turn, SAMHD1 depletion allows viral replication in host myeloid cells by preventing SAMHD1-mediated hydrolysis of intracellular dNTPs necessary for reverse transcription (By similarity).</text>
</comment>
<comment type="subunit">
    <text evidence="1">Interacts with the P6 region of unprocessed GAG. Interacts with host VPRBP/DCAF1, leading to change substrate specificity of the CUL4A-DDB1 E3 ligase complex (By similarity).</text>
</comment>
<comment type="subcellular location">
    <subcellularLocation>
        <location>Virion</location>
    </subcellularLocation>
    <subcellularLocation>
        <location>Host nucleus</location>
    </subcellularLocation>
    <text evidence="1">Nuclear just after virion uncoating, or if expressed in the absence of unprocessed GAG.</text>
</comment>
<comment type="miscellaneous">
    <text>The 155 isolate is from a monkey imported from Kenya.</text>
</comment>
<comment type="similarity">
    <text evidence="3">Belongs to the lentivirus VPX protein family.</text>
</comment>
<name>VPX_SIVV1</name>
<dbReference type="EMBL" id="M29975">
    <property type="protein sequence ID" value="AAA91908.1"/>
    <property type="molecule type" value="Genomic_RNA"/>
</dbReference>
<dbReference type="SMR" id="P27976"/>
<dbReference type="Proteomes" id="UP000258159">
    <property type="component" value="Segment"/>
</dbReference>
<dbReference type="GO" id="GO:0042025">
    <property type="term" value="C:host cell nucleus"/>
    <property type="evidence" value="ECO:0007669"/>
    <property type="project" value="UniProtKB-SubCell"/>
</dbReference>
<dbReference type="GO" id="GO:0044423">
    <property type="term" value="C:virion component"/>
    <property type="evidence" value="ECO:0007669"/>
    <property type="project" value="UniProtKB-KW"/>
</dbReference>
<dbReference type="GO" id="GO:0052170">
    <property type="term" value="P:symbiont-mediated suppression of host innate immune response"/>
    <property type="evidence" value="ECO:0007669"/>
    <property type="project" value="UniProtKB-KW"/>
</dbReference>
<dbReference type="GO" id="GO:0019058">
    <property type="term" value="P:viral life cycle"/>
    <property type="evidence" value="ECO:0007669"/>
    <property type="project" value="InterPro"/>
</dbReference>
<dbReference type="Gene3D" id="1.20.5.4730">
    <property type="match status" value="1"/>
</dbReference>
<dbReference type="InterPro" id="IPR053711">
    <property type="entry name" value="Lentiviral_Vpx_assoc_factor"/>
</dbReference>
<dbReference type="InterPro" id="IPR000012">
    <property type="entry name" value="RetroV_VpR/X"/>
</dbReference>
<dbReference type="Pfam" id="PF00522">
    <property type="entry name" value="VPR"/>
    <property type="match status" value="1"/>
</dbReference>
<dbReference type="PRINTS" id="PR00444">
    <property type="entry name" value="HIVVPRVPX"/>
</dbReference>
<organism>
    <name type="scientific">Simian immunodeficiency virus agm.vervet (isolate AGM155)</name>
    <name type="common">SIV-agm.ver</name>
    <name type="synonym">Simian immunodeficiency virus African green monkey vervet</name>
    <dbReference type="NCBI Taxonomy" id="11727"/>
    <lineage>
        <taxon>Viruses</taxon>
        <taxon>Riboviria</taxon>
        <taxon>Pararnavirae</taxon>
        <taxon>Artverviricota</taxon>
        <taxon>Revtraviricetes</taxon>
        <taxon>Ortervirales</taxon>
        <taxon>Retroviridae</taxon>
        <taxon>Orthoretrovirinae</taxon>
        <taxon>Lentivirus</taxon>
        <taxon>Simian immunodeficiency virus</taxon>
    </lineage>
</organism>
<feature type="chain" id="PRO_0000085399" description="Protein Vpx">
    <location>
        <begin position="1"/>
        <end position="119"/>
    </location>
</feature>
<feature type="region of interest" description="Disordered" evidence="2">
    <location>
        <begin position="98"/>
        <end position="119"/>
    </location>
</feature>
<proteinExistence type="inferred from homology"/>
<sequence>MASGRDPREERPGGLEIWDLSREPWDEWLRDMVEEINNEAKLHFGRELLYQVWNYCQEEGERQGRPIAERAYKYYRLVQKALFVHFRCGCRRRQPFEPYEERRNGQGGGRPGRVPPGLD</sequence>
<reference key="1">
    <citation type="journal article" date="1990" name="J. Virol.">
        <title>Simian immunodeficiency viruses from African green monkeys display unusual genetic diversity.</title>
        <authorList>
            <person name="Johnson P.R."/>
            <person name="Fomsgaard A."/>
            <person name="Allan J.S."/>
            <person name="Gravell M."/>
            <person name="London W.T."/>
            <person name="Olmstead R.A."/>
            <person name="Hirsch V.M."/>
        </authorList>
    </citation>
    <scope>NUCLEOTIDE SEQUENCE [GENOMIC RNA]</scope>
</reference>
<gene>
    <name type="primary">vpx</name>
</gene>
<protein>
    <recommendedName>
        <fullName>Protein Vpx</fullName>
    </recommendedName>
    <alternativeName>
        <fullName>Viral protein X</fullName>
    </alternativeName>
    <alternativeName>
        <fullName>X ORF protein</fullName>
    </alternativeName>
</protein>
<keyword id="KW-1048">Host nucleus</keyword>
<keyword id="KW-0945">Host-virus interaction</keyword>
<keyword id="KW-1090">Inhibition of host innate immune response by virus</keyword>
<keyword id="KW-0899">Viral immunoevasion</keyword>
<keyword id="KW-0946">Virion</keyword>
<organismHost>
    <name type="scientific">Cercopithecidae</name>
    <name type="common">Old World monkeys</name>
    <dbReference type="NCBI Taxonomy" id="9527"/>
</organismHost>
<evidence type="ECO:0000250" key="1"/>
<evidence type="ECO:0000256" key="2">
    <source>
        <dbReference type="SAM" id="MobiDB-lite"/>
    </source>
</evidence>
<evidence type="ECO:0000305" key="3"/>
<accession>P27976</accession>